<sequence>MRLTMMKCKLHRATVTQADLHYEGSISIDRDYLEAAGILPHEQVDVLNINNGERFTTYAIEAPRGSRTFGINGAAARLAQVGDRIIVVAYAEMEAAEAEQHDPVVVLLDEHNKVIAKPQAA</sequence>
<reference key="1">
    <citation type="submission" date="2006-08" db="EMBL/GenBank/DDBJ databases">
        <title>Complete sequence of Maricaulis maris MCS10.</title>
        <authorList>
            <consortium name="US DOE Joint Genome Institute"/>
            <person name="Copeland A."/>
            <person name="Lucas S."/>
            <person name="Lapidus A."/>
            <person name="Barry K."/>
            <person name="Detter J.C."/>
            <person name="Glavina del Rio T."/>
            <person name="Hammon N."/>
            <person name="Israni S."/>
            <person name="Dalin E."/>
            <person name="Tice H."/>
            <person name="Pitluck S."/>
            <person name="Saunders E."/>
            <person name="Brettin T."/>
            <person name="Bruce D."/>
            <person name="Han C."/>
            <person name="Tapia R."/>
            <person name="Gilna P."/>
            <person name="Schmutz J."/>
            <person name="Larimer F."/>
            <person name="Land M."/>
            <person name="Hauser L."/>
            <person name="Kyrpides N."/>
            <person name="Mikhailova N."/>
            <person name="Viollier P."/>
            <person name="Stephens C."/>
            <person name="Richardson P."/>
        </authorList>
    </citation>
    <scope>NUCLEOTIDE SEQUENCE [LARGE SCALE GENOMIC DNA]</scope>
    <source>
        <strain>MCS10</strain>
    </source>
</reference>
<comment type="function">
    <text evidence="1">Catalyzes the pyruvoyl-dependent decarboxylation of aspartate to produce beta-alanine.</text>
</comment>
<comment type="catalytic activity">
    <reaction evidence="1">
        <text>L-aspartate + H(+) = beta-alanine + CO2</text>
        <dbReference type="Rhea" id="RHEA:19497"/>
        <dbReference type="ChEBI" id="CHEBI:15378"/>
        <dbReference type="ChEBI" id="CHEBI:16526"/>
        <dbReference type="ChEBI" id="CHEBI:29991"/>
        <dbReference type="ChEBI" id="CHEBI:57966"/>
        <dbReference type="EC" id="4.1.1.11"/>
    </reaction>
</comment>
<comment type="cofactor">
    <cofactor evidence="1">
        <name>pyruvate</name>
        <dbReference type="ChEBI" id="CHEBI:15361"/>
    </cofactor>
    <text evidence="1">Binds 1 pyruvoyl group covalently per subunit.</text>
</comment>
<comment type="pathway">
    <text evidence="1">Cofactor biosynthesis; (R)-pantothenate biosynthesis; beta-alanine from L-aspartate: step 1/1.</text>
</comment>
<comment type="subunit">
    <text evidence="1">Heterooctamer of four alpha and four beta subunits.</text>
</comment>
<comment type="subcellular location">
    <subcellularLocation>
        <location evidence="1">Cytoplasm</location>
    </subcellularLocation>
</comment>
<comment type="PTM">
    <text evidence="1">Is synthesized initially as an inactive proenzyme, which is activated by self-cleavage at a specific serine bond to produce a beta-subunit with a hydroxyl group at its C-terminus and an alpha-subunit with a pyruvoyl group at its N-terminus.</text>
</comment>
<comment type="similarity">
    <text evidence="1">Belongs to the PanD family.</text>
</comment>
<organism>
    <name type="scientific">Maricaulis maris (strain MCS10)</name>
    <name type="common">Caulobacter maris</name>
    <dbReference type="NCBI Taxonomy" id="394221"/>
    <lineage>
        <taxon>Bacteria</taxon>
        <taxon>Pseudomonadati</taxon>
        <taxon>Pseudomonadota</taxon>
        <taxon>Alphaproteobacteria</taxon>
        <taxon>Maricaulales</taxon>
        <taxon>Maricaulaceae</taxon>
        <taxon>Maricaulis</taxon>
    </lineage>
</organism>
<protein>
    <recommendedName>
        <fullName evidence="1">Aspartate 1-decarboxylase</fullName>
        <ecNumber evidence="1">4.1.1.11</ecNumber>
    </recommendedName>
    <alternativeName>
        <fullName evidence="1">Aspartate alpha-decarboxylase</fullName>
    </alternativeName>
    <component>
        <recommendedName>
            <fullName evidence="1">Aspartate 1-decarboxylase beta chain</fullName>
        </recommendedName>
    </component>
    <component>
        <recommendedName>
            <fullName evidence="1">Aspartate 1-decarboxylase alpha chain</fullName>
        </recommendedName>
    </component>
</protein>
<accession>Q0AMS2</accession>
<evidence type="ECO:0000255" key="1">
    <source>
        <dbReference type="HAMAP-Rule" id="MF_00446"/>
    </source>
</evidence>
<keyword id="KW-0068">Autocatalytic cleavage</keyword>
<keyword id="KW-0963">Cytoplasm</keyword>
<keyword id="KW-0210">Decarboxylase</keyword>
<keyword id="KW-0456">Lyase</keyword>
<keyword id="KW-0566">Pantothenate biosynthesis</keyword>
<keyword id="KW-0670">Pyruvate</keyword>
<keyword id="KW-1185">Reference proteome</keyword>
<keyword id="KW-0704">Schiff base</keyword>
<keyword id="KW-0865">Zymogen</keyword>
<feature type="chain" id="PRO_0000307011" description="Aspartate 1-decarboxylase beta chain" evidence="1">
    <location>
        <begin position="1"/>
        <end position="24"/>
    </location>
</feature>
<feature type="chain" id="PRO_0000307012" description="Aspartate 1-decarboxylase alpha chain" evidence="1">
    <location>
        <begin position="25"/>
        <end position="121"/>
    </location>
</feature>
<feature type="active site" description="Schiff-base intermediate with substrate; via pyruvic acid" evidence="1">
    <location>
        <position position="25"/>
    </location>
</feature>
<feature type="active site" description="Proton donor" evidence="1">
    <location>
        <position position="58"/>
    </location>
</feature>
<feature type="binding site" evidence="1">
    <location>
        <position position="57"/>
    </location>
    <ligand>
        <name>substrate</name>
    </ligand>
</feature>
<feature type="binding site" evidence="1">
    <location>
        <begin position="73"/>
        <end position="75"/>
    </location>
    <ligand>
        <name>substrate</name>
    </ligand>
</feature>
<feature type="modified residue" description="Pyruvic acid (Ser)" evidence="1">
    <location>
        <position position="25"/>
    </location>
</feature>
<proteinExistence type="inferred from homology"/>
<dbReference type="EC" id="4.1.1.11" evidence="1"/>
<dbReference type="EMBL" id="CP000449">
    <property type="protein sequence ID" value="ABI66415.1"/>
    <property type="molecule type" value="Genomic_DNA"/>
</dbReference>
<dbReference type="RefSeq" id="WP_011644060.1">
    <property type="nucleotide sequence ID" value="NC_008347.1"/>
</dbReference>
<dbReference type="SMR" id="Q0AMS2"/>
<dbReference type="STRING" id="394221.Mmar10_2123"/>
<dbReference type="KEGG" id="mmr:Mmar10_2123"/>
<dbReference type="eggNOG" id="COG0853">
    <property type="taxonomic scope" value="Bacteria"/>
</dbReference>
<dbReference type="HOGENOM" id="CLU_115305_2_0_5"/>
<dbReference type="OrthoDB" id="9803983at2"/>
<dbReference type="UniPathway" id="UPA00028">
    <property type="reaction ID" value="UER00002"/>
</dbReference>
<dbReference type="Proteomes" id="UP000001964">
    <property type="component" value="Chromosome"/>
</dbReference>
<dbReference type="GO" id="GO:0005829">
    <property type="term" value="C:cytosol"/>
    <property type="evidence" value="ECO:0007669"/>
    <property type="project" value="TreeGrafter"/>
</dbReference>
<dbReference type="GO" id="GO:0004068">
    <property type="term" value="F:aspartate 1-decarboxylase activity"/>
    <property type="evidence" value="ECO:0007669"/>
    <property type="project" value="UniProtKB-UniRule"/>
</dbReference>
<dbReference type="GO" id="GO:0006523">
    <property type="term" value="P:alanine biosynthetic process"/>
    <property type="evidence" value="ECO:0007669"/>
    <property type="project" value="InterPro"/>
</dbReference>
<dbReference type="GO" id="GO:0015940">
    <property type="term" value="P:pantothenate biosynthetic process"/>
    <property type="evidence" value="ECO:0007669"/>
    <property type="project" value="UniProtKB-UniRule"/>
</dbReference>
<dbReference type="CDD" id="cd06919">
    <property type="entry name" value="Asp_decarbox"/>
    <property type="match status" value="1"/>
</dbReference>
<dbReference type="Gene3D" id="2.40.40.20">
    <property type="match status" value="1"/>
</dbReference>
<dbReference type="HAMAP" id="MF_00446">
    <property type="entry name" value="PanD"/>
    <property type="match status" value="1"/>
</dbReference>
<dbReference type="InterPro" id="IPR009010">
    <property type="entry name" value="Asp_de-COase-like_dom_sf"/>
</dbReference>
<dbReference type="InterPro" id="IPR003190">
    <property type="entry name" value="Asp_decarbox"/>
</dbReference>
<dbReference type="NCBIfam" id="TIGR00223">
    <property type="entry name" value="panD"/>
    <property type="match status" value="1"/>
</dbReference>
<dbReference type="PANTHER" id="PTHR21012">
    <property type="entry name" value="ASPARTATE 1-DECARBOXYLASE"/>
    <property type="match status" value="1"/>
</dbReference>
<dbReference type="PANTHER" id="PTHR21012:SF0">
    <property type="entry name" value="ASPARTATE 1-DECARBOXYLASE"/>
    <property type="match status" value="1"/>
</dbReference>
<dbReference type="Pfam" id="PF02261">
    <property type="entry name" value="Asp_decarbox"/>
    <property type="match status" value="1"/>
</dbReference>
<dbReference type="PIRSF" id="PIRSF006246">
    <property type="entry name" value="Asp_decarbox"/>
    <property type="match status" value="1"/>
</dbReference>
<dbReference type="SUPFAM" id="SSF50692">
    <property type="entry name" value="ADC-like"/>
    <property type="match status" value="1"/>
</dbReference>
<name>PAND_MARMM</name>
<gene>
    <name evidence="1" type="primary">panD</name>
    <name type="ordered locus">Mmar10_2123</name>
</gene>